<organism>
    <name type="scientific">Klebsiella pneumoniae subsp. pneumoniae (strain ATCC 700721 / MGH 78578)</name>
    <dbReference type="NCBI Taxonomy" id="272620"/>
    <lineage>
        <taxon>Bacteria</taxon>
        <taxon>Pseudomonadati</taxon>
        <taxon>Pseudomonadota</taxon>
        <taxon>Gammaproteobacteria</taxon>
        <taxon>Enterobacterales</taxon>
        <taxon>Enterobacteriaceae</taxon>
        <taxon>Klebsiella/Raoultella group</taxon>
        <taxon>Klebsiella</taxon>
        <taxon>Klebsiella pneumoniae complex</taxon>
    </lineage>
</organism>
<dbReference type="EMBL" id="CP000647">
    <property type="protein sequence ID" value="ABR79228.1"/>
    <property type="molecule type" value="Genomic_DNA"/>
</dbReference>
<dbReference type="RefSeq" id="WP_002920863.1">
    <property type="nucleotide sequence ID" value="NC_009648.1"/>
</dbReference>
<dbReference type="STRING" id="272620.KPN_03841"/>
<dbReference type="PaxDb" id="272620-KPN_03841"/>
<dbReference type="EnsemblBacteria" id="ABR79228">
    <property type="protein sequence ID" value="ABR79228"/>
    <property type="gene ID" value="KPN_03841"/>
</dbReference>
<dbReference type="KEGG" id="kpn:KPN_03841"/>
<dbReference type="HOGENOM" id="CLU_131462_1_0_6"/>
<dbReference type="UniPathway" id="UPA00030"/>
<dbReference type="PHI-base" id="PHI:7955"/>
<dbReference type="Proteomes" id="UP000000265">
    <property type="component" value="Chromosome"/>
</dbReference>
<dbReference type="GO" id="GO:0005886">
    <property type="term" value="C:plasma membrane"/>
    <property type="evidence" value="ECO:0007669"/>
    <property type="project" value="UniProtKB-SubCell"/>
</dbReference>
<dbReference type="GO" id="GO:1901505">
    <property type="term" value="F:carbohydrate derivative transmembrane transporter activity"/>
    <property type="evidence" value="ECO:0007669"/>
    <property type="project" value="InterPro"/>
</dbReference>
<dbReference type="GO" id="GO:0009245">
    <property type="term" value="P:lipid A biosynthetic process"/>
    <property type="evidence" value="ECO:0007669"/>
    <property type="project" value="UniProtKB-UniRule"/>
</dbReference>
<dbReference type="GO" id="GO:0009103">
    <property type="term" value="P:lipopolysaccharide biosynthetic process"/>
    <property type="evidence" value="ECO:0007669"/>
    <property type="project" value="UniProtKB-UniRule"/>
</dbReference>
<dbReference type="Gene3D" id="1.10.3730.20">
    <property type="match status" value="1"/>
</dbReference>
<dbReference type="HAMAP" id="MF_00538">
    <property type="entry name" value="Flippase_ArnF"/>
    <property type="match status" value="1"/>
</dbReference>
<dbReference type="InterPro" id="IPR022832">
    <property type="entry name" value="Flippase_ArnF"/>
</dbReference>
<dbReference type="InterPro" id="IPR000390">
    <property type="entry name" value="Small_drug/metabolite_transptr"/>
</dbReference>
<dbReference type="NCBIfam" id="NF002816">
    <property type="entry name" value="PRK02971.1-2"/>
    <property type="match status" value="1"/>
</dbReference>
<dbReference type="PANTHER" id="PTHR30561:SF9">
    <property type="entry name" value="4-AMINO-4-DEOXY-L-ARABINOSE-PHOSPHOUNDECAPRENOL FLIPPASE SUBUNIT ARNF-RELATED"/>
    <property type="match status" value="1"/>
</dbReference>
<dbReference type="PANTHER" id="PTHR30561">
    <property type="entry name" value="SMR FAMILY PROTON-DEPENDENT DRUG EFFLUX TRANSPORTER SUGE"/>
    <property type="match status" value="1"/>
</dbReference>
<dbReference type="SUPFAM" id="SSF103481">
    <property type="entry name" value="Multidrug resistance efflux transporter EmrE"/>
    <property type="match status" value="1"/>
</dbReference>
<evidence type="ECO:0000255" key="1">
    <source>
        <dbReference type="HAMAP-Rule" id="MF_00538"/>
    </source>
</evidence>
<sequence length="126" mass="14206">MGFFWALLSVGLVSAAQLLLRSAMVALPPLTDIVAFLQHLLHFQPGTFGLFFGLLGYLLSMVCWYFALHRLPLSKAYALLSLSYILVWAAAIWLPGWHEPFYWQSLLGVAIIVAGVLTIFWPVKRR</sequence>
<reference key="1">
    <citation type="submission" date="2006-09" db="EMBL/GenBank/DDBJ databases">
        <authorList>
            <consortium name="The Klebsiella pneumonia Genome Sequencing Project"/>
            <person name="McClelland M."/>
            <person name="Sanderson E.K."/>
            <person name="Spieth J."/>
            <person name="Clifton W.S."/>
            <person name="Latreille P."/>
            <person name="Sabo A."/>
            <person name="Pepin K."/>
            <person name="Bhonagiri V."/>
            <person name="Porwollik S."/>
            <person name="Ali J."/>
            <person name="Wilson R.K."/>
        </authorList>
    </citation>
    <scope>NUCLEOTIDE SEQUENCE [LARGE SCALE GENOMIC DNA]</scope>
    <source>
        <strain>ATCC 700721 / MGH 78578</strain>
    </source>
</reference>
<feature type="chain" id="PRO_0000382007" description="Probable 4-amino-4-deoxy-L-arabinose-phosphoundecaprenol flippase subunit ArnF">
    <location>
        <begin position="1"/>
        <end position="126"/>
    </location>
</feature>
<feature type="transmembrane region" description="Helical" evidence="1">
    <location>
        <begin position="1"/>
        <end position="21"/>
    </location>
</feature>
<feature type="topological domain" description="Periplasmic" evidence="1">
    <location>
        <begin position="22"/>
        <end position="47"/>
    </location>
</feature>
<feature type="transmembrane region" description="Helical" evidence="1">
    <location>
        <begin position="48"/>
        <end position="68"/>
    </location>
</feature>
<feature type="topological domain" description="Cytoplasmic" evidence="1">
    <location>
        <begin position="69"/>
        <end position="76"/>
    </location>
</feature>
<feature type="transmembrane region" description="Helical" evidence="1">
    <location>
        <begin position="77"/>
        <end position="97"/>
    </location>
</feature>
<feature type="topological domain" description="Periplasmic" evidence="1">
    <location>
        <begin position="98"/>
        <end position="100"/>
    </location>
</feature>
<feature type="transmembrane region" description="Helical" evidence="1">
    <location>
        <begin position="101"/>
        <end position="121"/>
    </location>
</feature>
<feature type="topological domain" description="Cytoplasmic" evidence="1">
    <location>
        <begin position="122"/>
        <end position="126"/>
    </location>
</feature>
<protein>
    <recommendedName>
        <fullName evidence="1">Probable 4-amino-4-deoxy-L-arabinose-phosphoundecaprenol flippase subunit ArnF</fullName>
        <shortName evidence="1">L-Ara4N-phosphoundecaprenol flippase subunit ArnF</shortName>
    </recommendedName>
    <alternativeName>
        <fullName evidence="1">Undecaprenyl phosphate-aminoarabinose flippase subunit ArnF</fullName>
    </alternativeName>
</protein>
<name>ARNF_KLEP7</name>
<keyword id="KW-0997">Cell inner membrane</keyword>
<keyword id="KW-1003">Cell membrane</keyword>
<keyword id="KW-0441">Lipid A biosynthesis</keyword>
<keyword id="KW-0444">Lipid biosynthesis</keyword>
<keyword id="KW-0443">Lipid metabolism</keyword>
<keyword id="KW-0448">Lipopolysaccharide biosynthesis</keyword>
<keyword id="KW-0472">Membrane</keyword>
<keyword id="KW-0812">Transmembrane</keyword>
<keyword id="KW-1133">Transmembrane helix</keyword>
<keyword id="KW-0813">Transport</keyword>
<proteinExistence type="inferred from homology"/>
<comment type="function">
    <text evidence="1">Translocates 4-amino-4-deoxy-L-arabinose-phosphoundecaprenol (alpha-L-Ara4N-phosphoundecaprenol) from the cytoplasmic to the periplasmic side of the inner membrane.</text>
</comment>
<comment type="pathway">
    <text evidence="1">Bacterial outer membrane biogenesis; lipopolysaccharide biosynthesis.</text>
</comment>
<comment type="subunit">
    <text evidence="1">Heterodimer of ArnE and ArnF.</text>
</comment>
<comment type="subcellular location">
    <subcellularLocation>
        <location evidence="1">Cell inner membrane</location>
        <topology evidence="1">Multi-pass membrane protein</topology>
    </subcellularLocation>
</comment>
<comment type="similarity">
    <text evidence="1">Belongs to the ArnF family.</text>
</comment>
<gene>
    <name evidence="1" type="primary">arnF</name>
    <name type="ordered locus">KPN78578_38040</name>
    <name type="ORF">KPN_03841</name>
</gene>
<accession>A6TF94</accession>